<comment type="function">
    <text evidence="3">Nonribosomal peptide synthetase; part of the gene cluster that mediates the biosynthesis of the benzazepine alkaloid nanangelenin A which contains an unprecedented 3,4-dihydro-1-benzazepine-2,5-dione-N-prenyl-N-acetoxy-anthranilamide scaffold (PubMed:32182055). The first step of nanangelenin biosynthesis is catalyzed by the indoleamine 2,3-dioxygenase nanC which produces N-formyl-kynurenine through the catabolism of tryptophan (PubMed:32182055). The two-module NRPS nanA then utilizes anthranilate (Ant) and L-kynurenine (L-Kyn) to assemble the dipeptide product nanangelenin B (PubMed:32182055). The first adenylation domain of nanA (A1) loads anthranilate onto the T1 domain, while A2 loads kynurenine, generated through spontaneous nonenzymatic deformylation of the nanC-supplied N-formyl-kynurenine (PubMed:32182055). The peptide bond formation between the tethered amino acids is catalyzed by the first condensation domain (C1) between anthranilate's carbonyl carbon and kynurenine's aliphatic primary amine (PubMed:32182055). The second C domain (C2) catalyzes the final cyclization event between the aromatic amine of kynurenine and the tethered carbonyl carbon, yielding nanangelenin B (PubMed:32182055). The terminal T3 domain enhances the catalytic efficiency of C2, suggesting the T2-tethered Ant-L-Kyn is transferred to T3 prior to cyclization by C2 (PubMed:32182055). Once released from nanA, nanangelenin B is then prenylated by the prenyltransferase nanD to form nanangelenin C (PubMed:32182055). Nanangelenin C is then N-hydroxylated by the FAD-dependent monooxygenase nanF and further acetylated by the acetyltransferase nanB to yield nanangelenin F (PubMed:32182055). Finally, the N-methyltransferase nanE methylates the amide nitrogen of 1-benzazepine to convert nanangelenin F into nanangelenin A (PubMed:32182055). NanE is also able to methylate most of the intermediates of the pathway such as nanangelenin B and nanangelenin C to produce nanangelenin D and nanangelenin E, respectively (PubMed:32182055).</text>
</comment>
<comment type="pathway">
    <text evidence="3">Secondary metabolite biosynthesis.</text>
</comment>
<comment type="domain">
    <text evidence="3">NRP synthetases are composed of discrete domains (adenylation (A), thiolation (T) or peptidyl carrier protein (PCP) and condensation (C) domains) which when grouped together are referred to as a single module. Each module is responsible for the recognition (via the A domain) and incorporation of a single amino acid into the growing peptide product. Thus, an NRP synthetase is generally composed of one or more modules and can terminate in a thioesterase domain (TE) that releases the newly synthesized peptide from the enzyme. NanA has the following architecture: A1-T1-C1-A2-T2-C2-T3.</text>
</comment>
<comment type="similarity">
    <text evidence="5">Belongs to the NRP synthetase family.</text>
</comment>
<feature type="chain" id="PRO_0000452964" description="Nonribosomal peptide synthetase nanA">
    <location>
        <begin position="1"/>
        <end position="2486"/>
    </location>
</feature>
<feature type="domain" description="Carrier 1" evidence="2 6">
    <location>
        <begin position="786"/>
        <end position="860"/>
    </location>
</feature>
<feature type="domain" description="Carrier 2" evidence="2 6">
    <location>
        <begin position="1872"/>
        <end position="1948"/>
    </location>
</feature>
<feature type="domain" description="Carrier 3" evidence="2 6">
    <location>
        <begin position="2404"/>
        <end position="2480"/>
    </location>
</feature>
<feature type="region of interest" description="Adenylation 1" evidence="1 6">
    <location>
        <begin position="231"/>
        <end position="637"/>
    </location>
</feature>
<feature type="region of interest" description="Condensation 1" evidence="1 6">
    <location>
        <begin position="902"/>
        <end position="1314"/>
    </location>
</feature>
<feature type="region of interest" description="Adenylation 2" evidence="1 6">
    <location>
        <begin position="1339"/>
        <end position="1735"/>
    </location>
</feature>
<feature type="region of interest" description="Condensation 2" evidence="1 6">
    <location>
        <begin position="2404"/>
        <end position="2480"/>
    </location>
</feature>
<feature type="modified residue" description="O-(pantetheine 4'-phosphoryl)serine" evidence="2">
    <location>
        <position position="820"/>
    </location>
</feature>
<feature type="modified residue" description="O-(pantetheine 4'-phosphoryl)serine" evidence="2">
    <location>
        <position position="1909"/>
    </location>
</feature>
<feature type="modified residue" description="O-(pantetheine 4'-phosphoryl)serine" evidence="2">
    <location>
        <position position="2441"/>
    </location>
</feature>
<feature type="mutagenesis site" description="Impairs the cyclization of the Ant-L-Kyn dipeptide." evidence="3">
    <original>H</original>
    <variation>A</variation>
    <location>
        <position position="2106"/>
    </location>
</feature>
<feature type="mutagenesis site" description="Strongly ddecreases the cyclization rate of the Ant-L-Kyn dipeptide." evidence="3">
    <original>S</original>
    <variation>A</variation>
    <location>
        <position position="2441"/>
    </location>
</feature>
<keyword id="KW-0436">Ligase</keyword>
<keyword id="KW-0596">Phosphopantetheine</keyword>
<keyword id="KW-0597">Phosphoprotein</keyword>
<name>NANA_ASPNN</name>
<proteinExistence type="evidence at protein level"/>
<dbReference type="EC" id="6.3.2.-" evidence="3"/>
<dbReference type="EMBL" id="MT024570">
    <property type="protein sequence ID" value="QIQ51365.1"/>
    <property type="molecule type" value="Genomic_DNA"/>
</dbReference>
<dbReference type="SMR" id="A0A6G9KH54"/>
<dbReference type="OrthoDB" id="416786at2759"/>
<dbReference type="GO" id="GO:0005737">
    <property type="term" value="C:cytoplasm"/>
    <property type="evidence" value="ECO:0007669"/>
    <property type="project" value="TreeGrafter"/>
</dbReference>
<dbReference type="GO" id="GO:0016874">
    <property type="term" value="F:ligase activity"/>
    <property type="evidence" value="ECO:0007669"/>
    <property type="project" value="UniProtKB-KW"/>
</dbReference>
<dbReference type="GO" id="GO:0031177">
    <property type="term" value="F:phosphopantetheine binding"/>
    <property type="evidence" value="ECO:0007669"/>
    <property type="project" value="InterPro"/>
</dbReference>
<dbReference type="GO" id="GO:0043041">
    <property type="term" value="P:amino acid activation for nonribosomal peptide biosynthetic process"/>
    <property type="evidence" value="ECO:0007669"/>
    <property type="project" value="TreeGrafter"/>
</dbReference>
<dbReference type="GO" id="GO:0044550">
    <property type="term" value="P:secondary metabolite biosynthetic process"/>
    <property type="evidence" value="ECO:0007669"/>
    <property type="project" value="TreeGrafter"/>
</dbReference>
<dbReference type="CDD" id="cd05918">
    <property type="entry name" value="A_NRPS_SidN3_like"/>
    <property type="match status" value="2"/>
</dbReference>
<dbReference type="CDD" id="cd19542">
    <property type="entry name" value="CT_NRPS-like"/>
    <property type="match status" value="1"/>
</dbReference>
<dbReference type="CDD" id="cd19545">
    <property type="entry name" value="FUM14_C_NRPS-like"/>
    <property type="match status" value="1"/>
</dbReference>
<dbReference type="FunFam" id="3.30.300.30:FF:000015">
    <property type="entry name" value="Nonribosomal peptide synthase SidD"/>
    <property type="match status" value="2"/>
</dbReference>
<dbReference type="FunFam" id="3.30.559.30:FF:000003">
    <property type="entry name" value="Nonribosomal peptide synthase SidD"/>
    <property type="match status" value="1"/>
</dbReference>
<dbReference type="FunFam" id="1.10.1200.10:FF:000005">
    <property type="entry name" value="Nonribosomal peptide synthetase 1"/>
    <property type="match status" value="1"/>
</dbReference>
<dbReference type="FunFam" id="3.40.50.12780:FF:000014">
    <property type="entry name" value="Nonribosomal peptide synthetase 1"/>
    <property type="match status" value="1"/>
</dbReference>
<dbReference type="Gene3D" id="3.30.300.30">
    <property type="match status" value="2"/>
</dbReference>
<dbReference type="Gene3D" id="1.10.1200.10">
    <property type="entry name" value="ACP-like"/>
    <property type="match status" value="3"/>
</dbReference>
<dbReference type="Gene3D" id="3.30.559.10">
    <property type="entry name" value="Chloramphenicol acetyltransferase-like domain"/>
    <property type="match status" value="2"/>
</dbReference>
<dbReference type="Gene3D" id="3.40.50.12780">
    <property type="entry name" value="N-terminal domain of ligase-like"/>
    <property type="match status" value="2"/>
</dbReference>
<dbReference type="Gene3D" id="3.30.559.30">
    <property type="entry name" value="Nonribosomal peptide synthetase, condensation domain"/>
    <property type="match status" value="3"/>
</dbReference>
<dbReference type="InterPro" id="IPR010071">
    <property type="entry name" value="AA_adenyl_dom"/>
</dbReference>
<dbReference type="InterPro" id="IPR036736">
    <property type="entry name" value="ACP-like_sf"/>
</dbReference>
<dbReference type="InterPro" id="IPR045851">
    <property type="entry name" value="AMP-bd_C_sf"/>
</dbReference>
<dbReference type="InterPro" id="IPR000873">
    <property type="entry name" value="AMP-dep_synth/lig_dom"/>
</dbReference>
<dbReference type="InterPro" id="IPR042099">
    <property type="entry name" value="ANL_N_sf"/>
</dbReference>
<dbReference type="InterPro" id="IPR023213">
    <property type="entry name" value="CAT-like_dom_sf"/>
</dbReference>
<dbReference type="InterPro" id="IPR001242">
    <property type="entry name" value="Condensatn"/>
</dbReference>
<dbReference type="InterPro" id="IPR020806">
    <property type="entry name" value="PKS_PP-bd"/>
</dbReference>
<dbReference type="InterPro" id="IPR009081">
    <property type="entry name" value="PP-bd_ACP"/>
</dbReference>
<dbReference type="InterPro" id="IPR006162">
    <property type="entry name" value="Ppantetheine_attach_site"/>
</dbReference>
<dbReference type="NCBIfam" id="TIGR01733">
    <property type="entry name" value="AA-adenyl-dom"/>
    <property type="match status" value="1"/>
</dbReference>
<dbReference type="PANTHER" id="PTHR45527:SF1">
    <property type="entry name" value="FATTY ACID SYNTHASE"/>
    <property type="match status" value="1"/>
</dbReference>
<dbReference type="PANTHER" id="PTHR45527">
    <property type="entry name" value="NONRIBOSOMAL PEPTIDE SYNTHETASE"/>
    <property type="match status" value="1"/>
</dbReference>
<dbReference type="Pfam" id="PF00501">
    <property type="entry name" value="AMP-binding"/>
    <property type="match status" value="2"/>
</dbReference>
<dbReference type="Pfam" id="PF00668">
    <property type="entry name" value="Condensation"/>
    <property type="match status" value="2"/>
</dbReference>
<dbReference type="Pfam" id="PF00550">
    <property type="entry name" value="PP-binding"/>
    <property type="match status" value="3"/>
</dbReference>
<dbReference type="SMART" id="SM00823">
    <property type="entry name" value="PKS_PP"/>
    <property type="match status" value="3"/>
</dbReference>
<dbReference type="SUPFAM" id="SSF56801">
    <property type="entry name" value="Acetyl-CoA synthetase-like"/>
    <property type="match status" value="2"/>
</dbReference>
<dbReference type="SUPFAM" id="SSF47336">
    <property type="entry name" value="ACP-like"/>
    <property type="match status" value="3"/>
</dbReference>
<dbReference type="SUPFAM" id="SSF52777">
    <property type="entry name" value="CoA-dependent acyltransferases"/>
    <property type="match status" value="4"/>
</dbReference>
<dbReference type="PROSITE" id="PS50075">
    <property type="entry name" value="CARRIER"/>
    <property type="match status" value="3"/>
</dbReference>
<dbReference type="PROSITE" id="PS00012">
    <property type="entry name" value="PHOSPHOPANTETHEINE"/>
    <property type="match status" value="3"/>
</dbReference>
<evidence type="ECO:0000255" key="1"/>
<evidence type="ECO:0000255" key="2">
    <source>
        <dbReference type="PROSITE-ProRule" id="PRU00258"/>
    </source>
</evidence>
<evidence type="ECO:0000269" key="3">
    <source>
    </source>
</evidence>
<evidence type="ECO:0000303" key="4">
    <source>
    </source>
</evidence>
<evidence type="ECO:0000305" key="5"/>
<evidence type="ECO:0000305" key="6">
    <source>
    </source>
</evidence>
<accession>A0A6G9KH54</accession>
<sequence>MSLTTDEAGRKSICLFPAIVTNTKSANKPGMQKVALDPILCRDLNDHDRFQNRGELQLLLSTAWTIVLHRFAEANPVHFAVVVDIKRKKLCESWSVEVRPRSLVSSLLDLESWTISTLSRPSYHTFNTAVFIRDEYLTESEMSDVNIVAHTNKSQITVNLVYRCRHLSAFHAENLMSSFSCAMQSVLREPHQPLGKISLCSLAQQQQISRWQNQPLKEDSKTAMWHRLAEFSARQPLSPAVQSTSGYLTYADLDELSSRMAVCLQDKHRVKPGDMVLLCVQKTPWAIVAMLAINKTGGCFVPCDPTHPVARRQVMATRCQARLAVVSPGYEDLLARIVPEISINPEPAMTEWRESFVPGDDNRTHRPIFSPSAPAYCFFTSGSTGEPKGCIGSHSALAALAHQVPALRMSTESRVLQFAKFGFGISFIEIFCTLAAGGTVCILSDGERLDALPDAMNQMRVNWALLTPTVTQSLVPEQIPGLGMLFLGGEAPDDGLILRWKDKVSLFQVFGTTEMAGVTLVSSRITSPAQRKTVGFGANARVWLCDVSEEEENNAGNLSLAPIGAVGELVIGGPSLGAGYLGDPQRTHALFLELPTSVVAGFSSNLQRVYKTGDLVRYNHDGSLSYIGRRGTQVKLRGQRLELEEVECHIIRLLAGTKTWTGALRVIALVIDPSGQDQTQVDRCTLAAFILMPQASREPRTSSNGTLEFLKLREQDHRDLDMVQEKLRDTLPPFMVPQIFLALVDVPRTATGKVDRNRIQRQINALPYQDLQHLAGRRVQMLRAQTDIELKVHALICDVLQIQPEDVSMLDDFFQLGGNSMTAITLVSAAKKQEALKLAVADVFKHPVLADLARSAKETSKVSTVQIATQRPFMMLDEESLDLNELKQTVVTQCNIGLSSLEDAYPCTPLQEGMMALTEQRRFSYRAKVQCHLQPEIDLSQFRRAWERVVVRNEILRTRLVSVSSQGVWQVVLRGSFAWDDTESQADEAPMGLGAKLVRGVIISTRSKGTFFILTIHHAICDLWAIRLLLDQVWREYTNVHAGTGSAAPNRFSQFVRYVRRMRNDPASEAYWKGQFAGLDSQVFPELPQPNFIPSPDDEIQHQISLPVRISETSTLSNYIRLAWAMVISHYTATDDVVFGEILNGRGAIMSEHGEDAVEHIVGPTLVSVPRRVELDYEMSVSEALSRIQEQRTEMIPFEQVGLQYIQRYSPETEVACMFQSHIVVQSAWNPPGQIFQSVQAGASITGGFASYAIGLECRLSMNESRLGLTACFDSRVVSRPHMQRLLNHLHMVLESMIQDPYQRLKSVPRVSSQDLDRIYTWNVGIPTNICGNVHESIRAQARKTPLAPAIDAWDGKLNFNELEHHSNQAALELQRRGLVPGDFVPLLFERSMWTPVAMIAVNKAGAAFVPMDTEQPLPRLQAMAKQVKCTVIVCSDSMRSMACQVTPAATVIPFSNVRSSGLRHCPLELQQLPTVTAHGAMYAAFTSGSTGTPKGVVIEHGSYCVAAQEYNKQTLIDRHSRVLQFASYSFDAHIGETISTLMAGACVCIPSDQDRQNALAQAASSMQITHAMLTPAVARLIRREEMPSLRTLTLMGEAMRPSDYAYWAEKVRLFNGYGPTECTVAISCREYRPGDAVQDIGWPRAAGVWITDPRDYHQLMPMGAVGELLLEGPPVARGYLNNPEQTAKAFISRPRWRPDIGHAHRIYRTGDLVRYTEDKSLQYVGRIGDQMKIRGQRIERGEVESQLRRFWLPTGVEMAVDAVLAGDNRDRVCLVAFIEHNRKKVDGTDQGLCQSMLTSPDGDFSLQVIRVETQLQQHLPRFMVPVIFVPIYRLPHMLSGKIDRPRLKRELQAYTWEELRQFFPAAAPTRPPSTDQERALQDVWAHVLQVPASRIGVDDNFFHIGGDSVTGMQAVAQARTKHLDHSLADIFRYKTIAEILSHTSSASKTGADLANDIGGPVQLLGGRDALEQLDVSKEEIEDIYPCAPVQQGILLVQARKPAFYHVAFSWEVTNSTVEKTGRAIEQIIARHAIFRTCFLQPGSNSSSFFQVVLRCRKQEIPIRALSDEIHQFPGDFQPSARVSSRFSIYYNHGNTSIFVRLDISHALWDGGPIMVVQRELDLGSQGQLIRYPEPSLYRNYIAYIARQDQEAAAGFWTTHLKDMAACHFPSLLTSDLRGPDTPEDLNFELRDYAAIRPYCRRINVTVPNFFCLVWAMVLRCVTLKDQICFGNLVSGRDLPLDDVLNIAGPMINLLPCRIDLSNGKVAEILQQIYSDYAASLSHQTFPIANLRSPCGRSPMAQFDTQLSIRRADSTNDTRNVHLCNIQSWDPHESRVNCYVILEDTRTQVNIRYWKSTMSTEQAALVRTCFCSAVSQLLDGENARVADLALISAVQRARIWGFLSSSETIVEPLERIWAEVLNRAQTQIGGNDDFFRLGGDSILAVRMVSLARKGGIDIRVADVFKFSTIYKLARLLQTQAQTAEGE</sequence>
<reference key="1">
    <citation type="journal article" date="2020" name="J. Am. Chem. Soc.">
        <title>Biosynthesis of a new benzazepine alkaloid nanangelenin A from Aspergillus nanangensis involves an unusual l-kynurenine-incorporating NRPS catalyzing regioselective lactamization.</title>
        <authorList>
            <person name="Li H."/>
            <person name="Gilchrist C.L.M."/>
            <person name="Phan C.S."/>
            <person name="Lacey H.J."/>
            <person name="Vuong D."/>
            <person name="Moggach S.A."/>
            <person name="Lacey E."/>
            <person name="Piggott A.M."/>
            <person name="Chooi Y.H."/>
        </authorList>
    </citation>
    <scope>NUCLEOTIDE SEQUENCE [GENOMIC DNA]</scope>
    <scope>FUNCTION</scope>
    <scope>PATHWAY</scope>
    <scope>DOMAIN</scope>
    <scope>CATALYTIC ACTIVITY</scope>
    <scope>MUTAGENESIS OF HIS-2106 AND SER-2441</scope>
    <source>
        <strain>CBS 146238 / FRR 6048 / MST FP2251</strain>
    </source>
</reference>
<gene>
    <name evidence="4" type="primary">nanA</name>
    <name type="ORF">FE257_001452</name>
</gene>
<organism>
    <name type="scientific">Aspergillus nanangensis</name>
    <dbReference type="NCBI Taxonomy" id="2582783"/>
    <lineage>
        <taxon>Eukaryota</taxon>
        <taxon>Fungi</taxon>
        <taxon>Dikarya</taxon>
        <taxon>Ascomycota</taxon>
        <taxon>Pezizomycotina</taxon>
        <taxon>Eurotiomycetes</taxon>
        <taxon>Eurotiomycetidae</taxon>
        <taxon>Eurotiales</taxon>
        <taxon>Aspergillaceae</taxon>
        <taxon>Aspergillus</taxon>
        <taxon>Aspergillus subgen. Circumdati</taxon>
    </lineage>
</organism>
<protein>
    <recommendedName>
        <fullName evidence="4">Nonribosomal peptide synthetase nanA</fullName>
        <ecNumber evidence="3">6.3.2.-</ecNumber>
    </recommendedName>
    <alternativeName>
        <fullName evidence="4">Nanangelenin A biosynthesis cluster protein A</fullName>
    </alternativeName>
</protein>